<sequence>MGIYDFQMKDAEGNAVDLSGYRGKVLLIVNTATRCGLTPQYEALQKLYAQYTAEGLEILDFPCNQFREQAPESSGEIAQVCMMKFGTKFKIFDKIEVNGANTAPLYAYLKSVKPQDKGNHLFKDFVLKLAALGEKRDEGDIKWNFTKFLVNRDGEVVERFAPSVTPEEIEADIRALL</sequence>
<gene>
    <name type="primary">gpxA</name>
    <name type="synonym">gph</name>
    <name type="ordered locus">NMC1547</name>
</gene>
<organism>
    <name type="scientific">Neisseria meningitidis serogroup C / serotype 2a (strain ATCC 700532 / DSM 15464 / FAM18)</name>
    <dbReference type="NCBI Taxonomy" id="272831"/>
    <lineage>
        <taxon>Bacteria</taxon>
        <taxon>Pseudomonadati</taxon>
        <taxon>Pseudomonadota</taxon>
        <taxon>Betaproteobacteria</taxon>
        <taxon>Neisseriales</taxon>
        <taxon>Neisseriaceae</taxon>
        <taxon>Neisseria</taxon>
    </lineage>
</organism>
<comment type="function">
    <text>Important in the cellular metabolism or defense processes particular to this pathogen.</text>
</comment>
<comment type="similarity">
    <text evidence="2">Belongs to the glutathione peroxidase family.</text>
</comment>
<feature type="chain" id="PRO_0000285027" description="Glutathione peroxidase homolog">
    <location>
        <begin position="1"/>
        <end position="177"/>
    </location>
</feature>
<feature type="active site" evidence="1">
    <location>
        <position position="35"/>
    </location>
</feature>
<reference key="1">
    <citation type="journal article" date="1995" name="DNA Seq.">
        <title>Identification of a glutathione peroxidase homolog in Neisseria meningitidis.</title>
        <authorList>
            <person name="Aho E.L."/>
            <person name="Kelly L.P."/>
        </authorList>
    </citation>
    <scope>NUCLEOTIDE SEQUENCE [GENOMIC DNA]</scope>
</reference>
<reference key="2">
    <citation type="journal article" date="2007" name="PLoS Genet.">
        <title>Meningococcal genetic variation mechanisms viewed through comparative analysis of serogroup C strain FAM18.</title>
        <authorList>
            <person name="Bentley S.D."/>
            <person name="Vernikos G.S."/>
            <person name="Snyder L.A.S."/>
            <person name="Churcher C."/>
            <person name="Arrowsmith C."/>
            <person name="Chillingworth T."/>
            <person name="Cronin A."/>
            <person name="Davis P.H."/>
            <person name="Holroyd N.E."/>
            <person name="Jagels K."/>
            <person name="Maddison M."/>
            <person name="Moule S."/>
            <person name="Rabbinowitsch E."/>
            <person name="Sharp S."/>
            <person name="Unwin L."/>
            <person name="Whitehead S."/>
            <person name="Quail M.A."/>
            <person name="Achtman M."/>
            <person name="Barrell B.G."/>
            <person name="Saunders N.J."/>
            <person name="Parkhill J."/>
        </authorList>
    </citation>
    <scope>NUCLEOTIDE SEQUENCE [LARGE SCALE GENOMIC DNA]</scope>
    <source>
        <strain>ATCC 700532 / DSM 15464 / FAM18</strain>
    </source>
</reference>
<proteinExistence type="inferred from homology"/>
<protein>
    <recommendedName>
        <fullName>Glutathione peroxidase homolog</fullName>
    </recommendedName>
</protein>
<evidence type="ECO:0000250" key="1"/>
<evidence type="ECO:0000305" key="2"/>
<accession>A1KV41</accession>
<accession>P0A0T6</accession>
<accession>P52036</accession>
<name>GPXA_NEIMF</name>
<dbReference type="EMBL" id="U16141">
    <property type="protein sequence ID" value="AAB41264.1"/>
    <property type="molecule type" value="Genomic_DNA"/>
</dbReference>
<dbReference type="EMBL" id="AM421808">
    <property type="protein sequence ID" value="CAM10742.1"/>
    <property type="molecule type" value="Genomic_DNA"/>
</dbReference>
<dbReference type="RefSeq" id="WP_002218952.1">
    <property type="nucleotide sequence ID" value="NC_008767.1"/>
</dbReference>
<dbReference type="SMR" id="A1KV41"/>
<dbReference type="KEGG" id="nmc:NMC1547"/>
<dbReference type="HOGENOM" id="CLU_029507_2_2_4"/>
<dbReference type="Proteomes" id="UP000002286">
    <property type="component" value="Chromosome"/>
</dbReference>
<dbReference type="GO" id="GO:0004601">
    <property type="term" value="F:peroxidase activity"/>
    <property type="evidence" value="ECO:0007669"/>
    <property type="project" value="UniProtKB-KW"/>
</dbReference>
<dbReference type="GO" id="GO:0034599">
    <property type="term" value="P:cellular response to oxidative stress"/>
    <property type="evidence" value="ECO:0007669"/>
    <property type="project" value="TreeGrafter"/>
</dbReference>
<dbReference type="CDD" id="cd00340">
    <property type="entry name" value="GSH_Peroxidase"/>
    <property type="match status" value="1"/>
</dbReference>
<dbReference type="FunFam" id="3.40.30.10:FF:000349">
    <property type="entry name" value="Glutathione peroxidase"/>
    <property type="match status" value="1"/>
</dbReference>
<dbReference type="Gene3D" id="3.40.30.10">
    <property type="entry name" value="Glutaredoxin"/>
    <property type="match status" value="1"/>
</dbReference>
<dbReference type="InterPro" id="IPR000889">
    <property type="entry name" value="Glutathione_peroxidase"/>
</dbReference>
<dbReference type="InterPro" id="IPR029759">
    <property type="entry name" value="GPX_AS"/>
</dbReference>
<dbReference type="InterPro" id="IPR029760">
    <property type="entry name" value="GPX_CS"/>
</dbReference>
<dbReference type="InterPro" id="IPR036249">
    <property type="entry name" value="Thioredoxin-like_sf"/>
</dbReference>
<dbReference type="PANTHER" id="PTHR11592">
    <property type="entry name" value="GLUTATHIONE PEROXIDASE"/>
    <property type="match status" value="1"/>
</dbReference>
<dbReference type="PANTHER" id="PTHR11592:SF78">
    <property type="entry name" value="GLUTATHIONE PEROXIDASE"/>
    <property type="match status" value="1"/>
</dbReference>
<dbReference type="Pfam" id="PF00255">
    <property type="entry name" value="GSHPx"/>
    <property type="match status" value="1"/>
</dbReference>
<dbReference type="PIRSF" id="PIRSF000303">
    <property type="entry name" value="Glutathion_perox"/>
    <property type="match status" value="1"/>
</dbReference>
<dbReference type="PRINTS" id="PR01011">
    <property type="entry name" value="GLUTPROXDASE"/>
</dbReference>
<dbReference type="SUPFAM" id="SSF52833">
    <property type="entry name" value="Thioredoxin-like"/>
    <property type="match status" value="1"/>
</dbReference>
<dbReference type="PROSITE" id="PS00460">
    <property type="entry name" value="GLUTATHIONE_PEROXID_1"/>
    <property type="match status" value="1"/>
</dbReference>
<dbReference type="PROSITE" id="PS00763">
    <property type="entry name" value="GLUTATHIONE_PEROXID_2"/>
    <property type="match status" value="1"/>
</dbReference>
<dbReference type="PROSITE" id="PS51355">
    <property type="entry name" value="GLUTATHIONE_PEROXID_3"/>
    <property type="match status" value="1"/>
</dbReference>
<keyword id="KW-0560">Oxidoreductase</keyword>
<keyword id="KW-0575">Peroxidase</keyword>